<accession>Q8LPN3</accession>
<accession>Q9ZV26</accession>
<organism>
    <name type="scientific">Arabidopsis thaliana</name>
    <name type="common">Mouse-ear cress</name>
    <dbReference type="NCBI Taxonomy" id="3702"/>
    <lineage>
        <taxon>Eukaryota</taxon>
        <taxon>Viridiplantae</taxon>
        <taxon>Streptophyta</taxon>
        <taxon>Embryophyta</taxon>
        <taxon>Tracheophyta</taxon>
        <taxon>Spermatophyta</taxon>
        <taxon>Magnoliopsida</taxon>
        <taxon>eudicotyledons</taxon>
        <taxon>Gunneridae</taxon>
        <taxon>Pentapetalae</taxon>
        <taxon>rosids</taxon>
        <taxon>malvids</taxon>
        <taxon>Brassicales</taxon>
        <taxon>Brassicaceae</taxon>
        <taxon>Camelineae</taxon>
        <taxon>Arabidopsis</taxon>
    </lineage>
</organism>
<dbReference type="EC" id="2.6.1.85"/>
<dbReference type="EMBL" id="BK001419">
    <property type="protein sequence ID" value="DAA01457.1"/>
    <property type="molecule type" value="mRNA"/>
</dbReference>
<dbReference type="EMBL" id="AC005727">
    <property type="protein sequence ID" value="AAC79592.1"/>
    <property type="status" value="ALT_INIT"/>
    <property type="molecule type" value="Genomic_DNA"/>
</dbReference>
<dbReference type="EMBL" id="CP002685">
    <property type="protein sequence ID" value="AEC08184.1"/>
    <property type="molecule type" value="Genomic_DNA"/>
</dbReference>
<dbReference type="EMBL" id="AY096797">
    <property type="protein sequence ID" value="AAM19955.1"/>
    <property type="molecule type" value="mRNA"/>
</dbReference>
<dbReference type="EMBL" id="BT002702">
    <property type="protein sequence ID" value="AAO11618.1"/>
    <property type="molecule type" value="mRNA"/>
</dbReference>
<dbReference type="PIR" id="A84690">
    <property type="entry name" value="A84690"/>
</dbReference>
<dbReference type="RefSeq" id="NP_850127.1">
    <property type="nucleotide sequence ID" value="NM_179796.2"/>
</dbReference>
<dbReference type="SMR" id="Q8LPN3"/>
<dbReference type="BioGRID" id="2787">
    <property type="interactions" value="1"/>
</dbReference>
<dbReference type="FunCoup" id="Q8LPN3">
    <property type="interactions" value="754"/>
</dbReference>
<dbReference type="IntAct" id="Q8LPN3">
    <property type="interactions" value="1"/>
</dbReference>
<dbReference type="STRING" id="3702.Q8LPN3"/>
<dbReference type="iPTMnet" id="Q8LPN3"/>
<dbReference type="PaxDb" id="3702-AT2G28880.1"/>
<dbReference type="ProteomicsDB" id="244714"/>
<dbReference type="EnsemblPlants" id="AT2G28880.1">
    <property type="protein sequence ID" value="AT2G28880.1"/>
    <property type="gene ID" value="AT2G28880"/>
</dbReference>
<dbReference type="GeneID" id="817437"/>
<dbReference type="Gramene" id="AT2G28880.1">
    <property type="protein sequence ID" value="AT2G28880.1"/>
    <property type="gene ID" value="AT2G28880"/>
</dbReference>
<dbReference type="KEGG" id="ath:AT2G28880"/>
<dbReference type="Araport" id="AT2G28880"/>
<dbReference type="TAIR" id="AT2G28880">
    <property type="gene designation" value="EMB1997"/>
</dbReference>
<dbReference type="eggNOG" id="KOG1224">
    <property type="taxonomic scope" value="Eukaryota"/>
</dbReference>
<dbReference type="HOGENOM" id="CLU_006493_0_2_1"/>
<dbReference type="InParanoid" id="Q8LPN3"/>
<dbReference type="OMA" id="DWSVNIR"/>
<dbReference type="PhylomeDB" id="Q8LPN3"/>
<dbReference type="BioCyc" id="ARA:AT2G28880-MONOMER"/>
<dbReference type="BioCyc" id="MetaCyc:AT2G28880-MONOMER"/>
<dbReference type="SABIO-RK" id="Q8LPN3"/>
<dbReference type="UniPathway" id="UPA00077">
    <property type="reaction ID" value="UER00149"/>
</dbReference>
<dbReference type="PRO" id="PR:Q8LPN3"/>
<dbReference type="Proteomes" id="UP000006548">
    <property type="component" value="Chromosome 2"/>
</dbReference>
<dbReference type="ExpressionAtlas" id="Q8LPN3">
    <property type="expression patterns" value="baseline and differential"/>
</dbReference>
<dbReference type="GO" id="GO:0009507">
    <property type="term" value="C:chloroplast"/>
    <property type="evidence" value="ECO:0000314"/>
    <property type="project" value="TAIR"/>
</dbReference>
<dbReference type="GO" id="GO:0046820">
    <property type="term" value="F:4-amino-4-deoxychorismate synthase activity"/>
    <property type="evidence" value="ECO:0000314"/>
    <property type="project" value="TAIR"/>
</dbReference>
<dbReference type="GO" id="GO:0008153">
    <property type="term" value="P:4-aminobenzoate biosynthetic process"/>
    <property type="evidence" value="ECO:0000303"/>
    <property type="project" value="TAIR"/>
</dbReference>
<dbReference type="GO" id="GO:0046417">
    <property type="term" value="P:chorismate metabolic process"/>
    <property type="evidence" value="ECO:0000314"/>
    <property type="project" value="TAIR"/>
</dbReference>
<dbReference type="GO" id="GO:0046656">
    <property type="term" value="P:folic acid biosynthetic process"/>
    <property type="evidence" value="ECO:0000303"/>
    <property type="project" value="TAIR"/>
</dbReference>
<dbReference type="GO" id="GO:0046654">
    <property type="term" value="P:tetrahydrofolate biosynthetic process"/>
    <property type="evidence" value="ECO:0007669"/>
    <property type="project" value="UniProtKB-UniPathway"/>
</dbReference>
<dbReference type="CDD" id="cd01743">
    <property type="entry name" value="GATase1_Anthranilate_Synthase"/>
    <property type="match status" value="1"/>
</dbReference>
<dbReference type="FunFam" id="3.40.50.880:FF:000072">
    <property type="entry name" value="Aminodeoxychorismate synthase, chloroplastic"/>
    <property type="match status" value="1"/>
</dbReference>
<dbReference type="FunFam" id="3.60.120.10:FF:000016">
    <property type="entry name" value="Aminodeoxychorismate synthase, chloroplastic"/>
    <property type="match status" value="1"/>
</dbReference>
<dbReference type="Gene3D" id="3.40.50.880">
    <property type="match status" value="1"/>
</dbReference>
<dbReference type="Gene3D" id="3.60.120.10">
    <property type="entry name" value="Anthranilate synthase"/>
    <property type="match status" value="1"/>
</dbReference>
<dbReference type="InterPro" id="IPR005802">
    <property type="entry name" value="ADC_synth_comp_1"/>
</dbReference>
<dbReference type="InterPro" id="IPR005801">
    <property type="entry name" value="ADC_synthase"/>
</dbReference>
<dbReference type="InterPro" id="IPR019999">
    <property type="entry name" value="Anth_synth_I-like"/>
</dbReference>
<dbReference type="InterPro" id="IPR006805">
    <property type="entry name" value="Anth_synth_I_N"/>
</dbReference>
<dbReference type="InterPro" id="IPR015890">
    <property type="entry name" value="Chorismate_C"/>
</dbReference>
<dbReference type="InterPro" id="IPR029062">
    <property type="entry name" value="Class_I_gatase-like"/>
</dbReference>
<dbReference type="InterPro" id="IPR017926">
    <property type="entry name" value="GATASE"/>
</dbReference>
<dbReference type="InterPro" id="IPR006221">
    <property type="entry name" value="TrpG/PapA_dom"/>
</dbReference>
<dbReference type="NCBIfam" id="TIGR00553">
    <property type="entry name" value="pabB"/>
    <property type="match status" value="1"/>
</dbReference>
<dbReference type="PANTHER" id="PTHR11236">
    <property type="entry name" value="AMINOBENZOATE/ANTHRANILATE SYNTHASE"/>
    <property type="match status" value="1"/>
</dbReference>
<dbReference type="PANTHER" id="PTHR11236:SF18">
    <property type="entry name" value="AMINODEOXYCHORISMATE SYNTHASE"/>
    <property type="match status" value="1"/>
</dbReference>
<dbReference type="Pfam" id="PF04715">
    <property type="entry name" value="Anth_synt_I_N"/>
    <property type="match status" value="1"/>
</dbReference>
<dbReference type="Pfam" id="PF00425">
    <property type="entry name" value="Chorismate_bind"/>
    <property type="match status" value="1"/>
</dbReference>
<dbReference type="Pfam" id="PF00117">
    <property type="entry name" value="GATase"/>
    <property type="match status" value="2"/>
</dbReference>
<dbReference type="PRINTS" id="PR00097">
    <property type="entry name" value="ANTSNTHASEII"/>
</dbReference>
<dbReference type="PRINTS" id="PR00099">
    <property type="entry name" value="CPSGATASE"/>
</dbReference>
<dbReference type="PRINTS" id="PR00096">
    <property type="entry name" value="GATASE"/>
</dbReference>
<dbReference type="SUPFAM" id="SSF56322">
    <property type="entry name" value="ADC synthase"/>
    <property type="match status" value="1"/>
</dbReference>
<dbReference type="SUPFAM" id="SSF52317">
    <property type="entry name" value="Class I glutamine amidotransferase-like"/>
    <property type="match status" value="1"/>
</dbReference>
<dbReference type="PROSITE" id="PS51273">
    <property type="entry name" value="GATASE_TYPE_1"/>
    <property type="match status" value="1"/>
</dbReference>
<proteinExistence type="evidence at protein level"/>
<keyword id="KW-0150">Chloroplast</keyword>
<keyword id="KW-0289">Folate biosynthesis</keyword>
<keyword id="KW-0315">Glutamine amidotransferase</keyword>
<keyword id="KW-0511">Multifunctional enzyme</keyword>
<keyword id="KW-0934">Plastid</keyword>
<keyword id="KW-1185">Reference proteome</keyword>
<keyword id="KW-0808">Transferase</keyword>
<keyword id="KW-0809">Transit peptide</keyword>
<evidence type="ECO:0000255" key="1"/>
<evidence type="ECO:0000255" key="2">
    <source>
        <dbReference type="PROSITE-ProRule" id="PRU00605"/>
    </source>
</evidence>
<evidence type="ECO:0000269" key="3">
    <source>
    </source>
</evidence>
<evidence type="ECO:0000269" key="4">
    <source>
    </source>
</evidence>
<evidence type="ECO:0000269" key="5">
    <source>
    </source>
</evidence>
<evidence type="ECO:0000305" key="6"/>
<name>ADCS_ARATH</name>
<comment type="function">
    <text evidence="3 4 5">Bifunctional enzyme that catalyzes the biosynthesis of 4-amino-4-deoxychorismate (ADC) from chorismate and glutamine. In the first step, a glutamine amidotransferase generates ammonia that is channelled between the binding sites of glutamine and chorismate and used along with chorismate in the second step, catalyzed by aminodeoxychorismate synthase, to produce ADC. Required for the synthesis of 4-aminobenzoate (PABA), an important component in tetrahydrofolate biosynthesis. Does not possess ADC lyase activity.</text>
</comment>
<comment type="catalytic activity">
    <reaction evidence="3 4 5">
        <text>chorismate + L-glutamine = 4-amino-4-deoxychorismate + L-glutamate</text>
        <dbReference type="Rhea" id="RHEA:11672"/>
        <dbReference type="ChEBI" id="CHEBI:29748"/>
        <dbReference type="ChEBI" id="CHEBI:29985"/>
        <dbReference type="ChEBI" id="CHEBI:58359"/>
        <dbReference type="ChEBI" id="CHEBI:58406"/>
        <dbReference type="EC" id="2.6.1.85"/>
    </reaction>
</comment>
<comment type="activity regulation">
    <text evidence="4 5">Activated by chorismate and inhibited by dihydrofolate and methotrexate.</text>
</comment>
<comment type="biophysicochemical properties">
    <kinetics>
        <KM evidence="4">600 uM for L-glutamine</KM>
        <KM evidence="4">1.5 uM for chorismate</KM>
    </kinetics>
</comment>
<comment type="pathway">
    <text>Cofactor biosynthesis; tetrahydrofolate biosynthesis; 4-aminobenzoate from chorismate: step 1/2.</text>
</comment>
<comment type="subcellular location">
    <subcellularLocation>
        <location evidence="3">Plastid</location>
        <location evidence="3">Chloroplast</location>
    </subcellularLocation>
</comment>
<comment type="domain">
    <text evidence="5">The PABA component provides the glutamine amidotransferase activity.</text>
</comment>
<comment type="domain">
    <text evidence="5">The PABB component catalyzes the formation of ADC by binding chorismate and ammonia.</text>
</comment>
<comment type="similarity">
    <text evidence="6">In the C-terminal section; belongs to the anthranilate synthase component I family.</text>
</comment>
<comment type="sequence caution" evidence="6">
    <conflict type="erroneous initiation">
        <sequence resource="EMBL-CDS" id="AAC79592"/>
    </conflict>
    <text>Truncated N-terminus.</text>
</comment>
<protein>
    <recommendedName>
        <fullName>Aminodeoxychorismate synthase, chloroplastic</fullName>
        <shortName>ADC synthase</shortName>
        <ecNumber>2.6.1.85</ecNumber>
    </recommendedName>
    <alternativeName>
        <fullName>P-aminobenzoic acid synthase</fullName>
        <shortName>PABA synthase</shortName>
    </alternativeName>
    <alternativeName>
        <fullName>Para-aminobenzoate synthase</fullName>
    </alternativeName>
    <alternativeName>
        <fullName>Protein EMBRYO DEFFECTIVE 1997</fullName>
    </alternativeName>
</protein>
<gene>
    <name type="primary">ADCS</name>
    <name type="synonym">EMB1997</name>
    <name type="ordered locus">At2g28880</name>
    <name type="ORF">F8N16.17</name>
</gene>
<reference key="1">
    <citation type="journal article" date="2004" name="Proc. Natl. Acad. Sci. U.S.A.">
        <title>Folate synthesis in plants: the p-aminobenzoate branch is initiated by a bifunctional PabA-PabB protein that is targeted to plastids.</title>
        <authorList>
            <person name="Basset G.J.C."/>
            <person name="Quinlivan E.P."/>
            <person name="Ravanel S."/>
            <person name="Rebeille F."/>
            <person name="Nichols B.P."/>
            <person name="Shinozaki K."/>
            <person name="Seki M."/>
            <person name="Adams-Phillips L.C."/>
            <person name="Giovannoni J.J."/>
            <person name="Gregory J.F."/>
            <person name="Hanson A.D."/>
        </authorList>
    </citation>
    <scope>NUCLEOTIDE SEQUENCE [MRNA]</scope>
    <scope>FUNCTION</scope>
    <scope>CATALYTIC ACTIVITY</scope>
    <scope>SUBCELLULAR LOCATION</scope>
</reference>
<reference key="2">
    <citation type="journal article" date="1999" name="Nature">
        <title>Sequence and analysis of chromosome 2 of the plant Arabidopsis thaliana.</title>
        <authorList>
            <person name="Lin X."/>
            <person name="Kaul S."/>
            <person name="Rounsley S.D."/>
            <person name="Shea T.P."/>
            <person name="Benito M.-I."/>
            <person name="Town C.D."/>
            <person name="Fujii C.Y."/>
            <person name="Mason T.M."/>
            <person name="Bowman C.L."/>
            <person name="Barnstead M.E."/>
            <person name="Feldblyum T.V."/>
            <person name="Buell C.R."/>
            <person name="Ketchum K.A."/>
            <person name="Lee J.J."/>
            <person name="Ronning C.M."/>
            <person name="Koo H.L."/>
            <person name="Moffat K.S."/>
            <person name="Cronin L.A."/>
            <person name="Shen M."/>
            <person name="Pai G."/>
            <person name="Van Aken S."/>
            <person name="Umayam L."/>
            <person name="Tallon L.J."/>
            <person name="Gill J.E."/>
            <person name="Adams M.D."/>
            <person name="Carrera A.J."/>
            <person name="Creasy T.H."/>
            <person name="Goodman H.M."/>
            <person name="Somerville C.R."/>
            <person name="Copenhaver G.P."/>
            <person name="Preuss D."/>
            <person name="Nierman W.C."/>
            <person name="White O."/>
            <person name="Eisen J.A."/>
            <person name="Salzberg S.L."/>
            <person name="Fraser C.M."/>
            <person name="Venter J.C."/>
        </authorList>
    </citation>
    <scope>NUCLEOTIDE SEQUENCE [LARGE SCALE GENOMIC DNA]</scope>
    <source>
        <strain>cv. Columbia</strain>
    </source>
</reference>
<reference key="3">
    <citation type="journal article" date="2017" name="Plant J.">
        <title>Araport11: a complete reannotation of the Arabidopsis thaliana reference genome.</title>
        <authorList>
            <person name="Cheng C.Y."/>
            <person name="Krishnakumar V."/>
            <person name="Chan A.P."/>
            <person name="Thibaud-Nissen F."/>
            <person name="Schobel S."/>
            <person name="Town C.D."/>
        </authorList>
    </citation>
    <scope>GENOME REANNOTATION</scope>
    <source>
        <strain>cv. Columbia</strain>
    </source>
</reference>
<reference key="4">
    <citation type="journal article" date="2003" name="Science">
        <title>Empirical analysis of transcriptional activity in the Arabidopsis genome.</title>
        <authorList>
            <person name="Yamada K."/>
            <person name="Lim J."/>
            <person name="Dale J.M."/>
            <person name="Chen H."/>
            <person name="Shinn P."/>
            <person name="Palm C.J."/>
            <person name="Southwick A.M."/>
            <person name="Wu H.C."/>
            <person name="Kim C.J."/>
            <person name="Nguyen M."/>
            <person name="Pham P.K."/>
            <person name="Cheuk R.F."/>
            <person name="Karlin-Newmann G."/>
            <person name="Liu S.X."/>
            <person name="Lam B."/>
            <person name="Sakano H."/>
            <person name="Wu T."/>
            <person name="Yu G."/>
            <person name="Miranda M."/>
            <person name="Quach H.L."/>
            <person name="Tripp M."/>
            <person name="Chang C.H."/>
            <person name="Lee J.M."/>
            <person name="Toriumi M.J."/>
            <person name="Chan M.M."/>
            <person name="Tang C.C."/>
            <person name="Onodera C.S."/>
            <person name="Deng J.M."/>
            <person name="Akiyama K."/>
            <person name="Ansari Y."/>
            <person name="Arakawa T."/>
            <person name="Banh J."/>
            <person name="Banno F."/>
            <person name="Bowser L."/>
            <person name="Brooks S.Y."/>
            <person name="Carninci P."/>
            <person name="Chao Q."/>
            <person name="Choy N."/>
            <person name="Enju A."/>
            <person name="Goldsmith A.D."/>
            <person name="Gurjal M."/>
            <person name="Hansen N.F."/>
            <person name="Hayashizaki Y."/>
            <person name="Johnson-Hopson C."/>
            <person name="Hsuan V.W."/>
            <person name="Iida K."/>
            <person name="Karnes M."/>
            <person name="Khan S."/>
            <person name="Koesema E."/>
            <person name="Ishida J."/>
            <person name="Jiang P.X."/>
            <person name="Jones T."/>
            <person name="Kawai J."/>
            <person name="Kamiya A."/>
            <person name="Meyers C."/>
            <person name="Nakajima M."/>
            <person name="Narusaka M."/>
            <person name="Seki M."/>
            <person name="Sakurai T."/>
            <person name="Satou M."/>
            <person name="Tamse R."/>
            <person name="Vaysberg M."/>
            <person name="Wallender E.K."/>
            <person name="Wong C."/>
            <person name="Yamamura Y."/>
            <person name="Yuan S."/>
            <person name="Shinozaki K."/>
            <person name="Davis R.W."/>
            <person name="Theologis A."/>
            <person name="Ecker J.R."/>
        </authorList>
    </citation>
    <scope>NUCLEOTIDE SEQUENCE [LARGE SCALE MRNA]</scope>
    <source>
        <strain>cv. Columbia</strain>
    </source>
</reference>
<reference key="5">
    <citation type="journal article" date="2006" name="Biochem. J.">
        <title>Folate synthesis in plants: purification, kinetic properties, and inhibition of aminodeoxychorismate synthase.</title>
        <authorList>
            <person name="Sahr T."/>
            <person name="Ravanel S."/>
            <person name="Basset G."/>
            <person name="Nichols B.P."/>
            <person name="Hanson A.D."/>
            <person name="Rebeille F."/>
        </authorList>
    </citation>
    <scope>FUNCTION</scope>
    <scope>CATALYTIC ACTIVITY</scope>
    <scope>BIOPHYSICOCHEMICAL PROPERTIES</scope>
    <scope>ACTIVITY REGULATION</scope>
</reference>
<reference key="6">
    <citation type="journal article" date="2011" name="Arch. Biochem. Biophys.">
        <title>The synthesis of pABA: Coupling between the glutamine amidotransferase and aminodeoxychorismate synthase domains of the bifunctional aminodeoxychorismate synthase from Arabidopsis thaliana.</title>
        <authorList>
            <person name="Camara D."/>
            <person name="Richefeu-Contesto C."/>
            <person name="Gambonnet B."/>
            <person name="Dumas R."/>
            <person name="Rebeille F."/>
        </authorList>
    </citation>
    <scope>FUNCTION</scope>
    <scope>CATALYTIC ACTIVITY</scope>
    <scope>ACTIVITY REGULATION</scope>
</reference>
<feature type="transit peptide" description="Chloroplast" evidence="1">
    <location>
        <begin position="1"/>
        <end position="45"/>
    </location>
</feature>
<feature type="chain" id="PRO_0000430154" description="Aminodeoxychorismate synthase, chloroplastic">
    <location>
        <begin position="46"/>
        <end position="919"/>
    </location>
</feature>
<feature type="domain" description="Glutamine amidotransferase type-1" evidence="2">
    <location>
        <begin position="86"/>
        <end position="342"/>
    </location>
</feature>
<feature type="region of interest" description="PABB component">
    <location>
        <begin position="436"/>
        <end position="910"/>
    </location>
</feature>
<feature type="active site" description="Nucleophile" evidence="2">
    <location>
        <position position="172"/>
    </location>
</feature>
<feature type="active site" evidence="2">
    <location>
        <position position="316"/>
    </location>
</feature>
<feature type="active site" evidence="2">
    <location>
        <position position="318"/>
    </location>
</feature>
<sequence>MNMNFSFCSTSSELSYPSENVLRFSVASRLFSPKWKKSFISLPCRSKTTRKVLASSRYVPGKLEDLSVVKKSLPRREPVEKLGFVRTLLIDNYDSYTFNIYQALSTINGVPPVVIRNDEWTWEEAYHYLYEDVAFDNIVISPGPGSPMCPADIGICLRLLLECRDIPILGVCLGHQALGYVHGAHVVHAPEPVHGRLSGIEHDGNILFSDIPSGRNSDFKVVRYHSLIIDKESLPKELVPIAWTIYDDTGSFSEKNSCVPVNNTGSPLGNGSVIPVSEKLENRSHWPSSHVNGKQDRHILMGIMHSSFPHYGLQFHPESIATTYGSQLFKNFKDITVNYWSRCKSTSLRRRNINDTANMQVPDATQLLKELSRTRCTGNGSSYFGNPKSLFSAKTNGVDVFDMVDSSYPKPHTKLLRLKWKKHERLAHKVGGVRNIFMELFGKNRGNDTFWLDTSSSDKARGRFSFMGGKGGSLWKQLTFSLSDQSEVTSKHAGHLLIEDSQSSTEKQFLEEGFLDFLRKELSSISYDEKDFEELPFDFCGGYVGCIGYDIKVECGMPINRHKSNAPDACFFFADNVVAIDHQLDDVYILSLYEEGTAETSFLNDTEEKLISLMGLSTRKLEDQTLPVIDSSQSKTSFVPDKSREQYINDVQSCMKYIKDGESYELCLTTQNRRKIGNADPLGLYLHLRERNPAPYAAFLNFSNANLSLCSSSPERFLKLDRNGMLEAKPIKGTIARGSTPEEDEFLKLQLKLSEKNQAENLMIVDLLRNDLGRVCEPGSVHVPNLMDVESYTTVHTMVSTIRGLKKTDISPVECVRAAFPGGSMTGAPKLRSVEILDSLENCSRGLYSGSIGYFSYNGTFDLNIVIRTVIIHEDEASIGAGGAIVALSSPEDEFEEMILKTRAPANAVMEFCSDQRRQ</sequence>